<comment type="function">
    <text evidence="1">Multifunctional regulator of fatty acid metabolism.</text>
</comment>
<comment type="subunit">
    <text evidence="1">Homodimer.</text>
</comment>
<comment type="subcellular location">
    <subcellularLocation>
        <location evidence="1">Cytoplasm</location>
    </subcellularLocation>
</comment>
<dbReference type="EMBL" id="CP001252">
    <property type="protein sequence ID" value="ACK47001.1"/>
    <property type="molecule type" value="Genomic_DNA"/>
</dbReference>
<dbReference type="RefSeq" id="WP_012587865.1">
    <property type="nucleotide sequence ID" value="NC_011663.1"/>
</dbReference>
<dbReference type="SMR" id="B8EAH2"/>
<dbReference type="KEGG" id="sbp:Sbal223_2507"/>
<dbReference type="HOGENOM" id="CLU_017584_9_4_6"/>
<dbReference type="Proteomes" id="UP000002507">
    <property type="component" value="Chromosome"/>
</dbReference>
<dbReference type="GO" id="GO:0005737">
    <property type="term" value="C:cytoplasm"/>
    <property type="evidence" value="ECO:0007669"/>
    <property type="project" value="UniProtKB-SubCell"/>
</dbReference>
<dbReference type="GO" id="GO:0003677">
    <property type="term" value="F:DNA binding"/>
    <property type="evidence" value="ECO:0007669"/>
    <property type="project" value="UniProtKB-KW"/>
</dbReference>
<dbReference type="GO" id="GO:0003700">
    <property type="term" value="F:DNA-binding transcription factor activity"/>
    <property type="evidence" value="ECO:0007669"/>
    <property type="project" value="UniProtKB-UniRule"/>
</dbReference>
<dbReference type="GO" id="GO:0000062">
    <property type="term" value="F:fatty-acyl-CoA binding"/>
    <property type="evidence" value="ECO:0007669"/>
    <property type="project" value="InterPro"/>
</dbReference>
<dbReference type="GO" id="GO:0006631">
    <property type="term" value="P:fatty acid metabolic process"/>
    <property type="evidence" value="ECO:0007669"/>
    <property type="project" value="UniProtKB-KW"/>
</dbReference>
<dbReference type="GO" id="GO:0019217">
    <property type="term" value="P:regulation of fatty acid metabolic process"/>
    <property type="evidence" value="ECO:0007669"/>
    <property type="project" value="UniProtKB-UniRule"/>
</dbReference>
<dbReference type="CDD" id="cd07377">
    <property type="entry name" value="WHTH_GntR"/>
    <property type="match status" value="1"/>
</dbReference>
<dbReference type="Gene3D" id="1.20.120.530">
    <property type="entry name" value="GntR ligand-binding domain-like"/>
    <property type="match status" value="1"/>
</dbReference>
<dbReference type="Gene3D" id="1.10.10.10">
    <property type="entry name" value="Winged helix-like DNA-binding domain superfamily/Winged helix DNA-binding domain"/>
    <property type="match status" value="1"/>
</dbReference>
<dbReference type="HAMAP" id="MF_00696">
    <property type="entry name" value="HTH_FadR"/>
    <property type="match status" value="1"/>
</dbReference>
<dbReference type="InterPro" id="IPR014178">
    <property type="entry name" value="FA-response_TF_FadR"/>
</dbReference>
<dbReference type="InterPro" id="IPR028374">
    <property type="entry name" value="FadR_C"/>
</dbReference>
<dbReference type="InterPro" id="IPR008920">
    <property type="entry name" value="TF_FadR/GntR_C"/>
</dbReference>
<dbReference type="InterPro" id="IPR000524">
    <property type="entry name" value="Tscrpt_reg_HTH_GntR"/>
</dbReference>
<dbReference type="InterPro" id="IPR036388">
    <property type="entry name" value="WH-like_DNA-bd_sf"/>
</dbReference>
<dbReference type="InterPro" id="IPR036390">
    <property type="entry name" value="WH_DNA-bd_sf"/>
</dbReference>
<dbReference type="NCBIfam" id="TIGR02812">
    <property type="entry name" value="fadR_gamma"/>
    <property type="match status" value="1"/>
</dbReference>
<dbReference type="NCBIfam" id="NF003444">
    <property type="entry name" value="PRK04984.1"/>
    <property type="match status" value="1"/>
</dbReference>
<dbReference type="PANTHER" id="PTHR43537:SF52">
    <property type="entry name" value="FATTY ACID METABOLISM REGULATOR PROTEIN"/>
    <property type="match status" value="1"/>
</dbReference>
<dbReference type="PANTHER" id="PTHR43537">
    <property type="entry name" value="TRANSCRIPTIONAL REGULATOR, GNTR FAMILY"/>
    <property type="match status" value="1"/>
</dbReference>
<dbReference type="Pfam" id="PF07840">
    <property type="entry name" value="FadR_C"/>
    <property type="match status" value="1"/>
</dbReference>
<dbReference type="Pfam" id="PF00392">
    <property type="entry name" value="GntR"/>
    <property type="match status" value="1"/>
</dbReference>
<dbReference type="PRINTS" id="PR00035">
    <property type="entry name" value="HTHGNTR"/>
</dbReference>
<dbReference type="SMART" id="SM00345">
    <property type="entry name" value="HTH_GNTR"/>
    <property type="match status" value="1"/>
</dbReference>
<dbReference type="SUPFAM" id="SSF48008">
    <property type="entry name" value="GntR ligand-binding domain-like"/>
    <property type="match status" value="1"/>
</dbReference>
<dbReference type="SUPFAM" id="SSF46785">
    <property type="entry name" value="Winged helix' DNA-binding domain"/>
    <property type="match status" value="1"/>
</dbReference>
<dbReference type="PROSITE" id="PS50949">
    <property type="entry name" value="HTH_GNTR"/>
    <property type="match status" value="1"/>
</dbReference>
<protein>
    <recommendedName>
        <fullName evidence="1">Fatty acid metabolism regulator protein</fullName>
    </recommendedName>
</protein>
<proteinExistence type="inferred from homology"/>
<keyword id="KW-0010">Activator</keyword>
<keyword id="KW-0963">Cytoplasm</keyword>
<keyword id="KW-0238">DNA-binding</keyword>
<keyword id="KW-0276">Fatty acid metabolism</keyword>
<keyword id="KW-0443">Lipid metabolism</keyword>
<keyword id="KW-0678">Repressor</keyword>
<keyword id="KW-0804">Transcription</keyword>
<keyword id="KW-0805">Transcription regulation</keyword>
<name>FADR_SHEB2</name>
<gene>
    <name evidence="1" type="primary">fadR</name>
    <name type="ordered locus">Sbal223_2507</name>
</gene>
<feature type="chain" id="PRO_1000201046" description="Fatty acid metabolism regulator protein">
    <location>
        <begin position="1"/>
        <end position="238"/>
    </location>
</feature>
<feature type="domain" description="HTH gntR-type" evidence="1">
    <location>
        <begin position="6"/>
        <end position="74"/>
    </location>
</feature>
<feature type="DNA-binding region" description="H-T-H motif" evidence="1">
    <location>
        <begin position="34"/>
        <end position="53"/>
    </location>
</feature>
<accession>B8EAH2</accession>
<evidence type="ECO:0000255" key="1">
    <source>
        <dbReference type="HAMAP-Rule" id="MF_00696"/>
    </source>
</evidence>
<sequence>MIINAKGPASFAEKYIVRSIWDNKFPPGSILPAERELSELIGVTRTTLREVLQRLARDGWLKIQHGKPTRVNNFWETSGLNILETIADLNPEGFPVLVDQLLSARTNVSAIYFRGALRYNPDTAVDVLAKIHQLEDTAESYAEFDYLLHHTLAFSSGNPLYVLILNGFKGLYSRVGRYYFTSSDARLLALNFYKELELLAQVKNYLDVPALMRTYGMNSGKMWLQLRDDMPASIAQDN</sequence>
<organism>
    <name type="scientific">Shewanella baltica (strain OS223)</name>
    <dbReference type="NCBI Taxonomy" id="407976"/>
    <lineage>
        <taxon>Bacteria</taxon>
        <taxon>Pseudomonadati</taxon>
        <taxon>Pseudomonadota</taxon>
        <taxon>Gammaproteobacteria</taxon>
        <taxon>Alteromonadales</taxon>
        <taxon>Shewanellaceae</taxon>
        <taxon>Shewanella</taxon>
    </lineage>
</organism>
<reference key="1">
    <citation type="submission" date="2008-12" db="EMBL/GenBank/DDBJ databases">
        <title>Complete sequence of chromosome of Shewanella baltica OS223.</title>
        <authorList>
            <consortium name="US DOE Joint Genome Institute"/>
            <person name="Lucas S."/>
            <person name="Copeland A."/>
            <person name="Lapidus A."/>
            <person name="Glavina del Rio T."/>
            <person name="Dalin E."/>
            <person name="Tice H."/>
            <person name="Bruce D."/>
            <person name="Goodwin L."/>
            <person name="Pitluck S."/>
            <person name="Chertkov O."/>
            <person name="Meincke L."/>
            <person name="Brettin T."/>
            <person name="Detter J.C."/>
            <person name="Han C."/>
            <person name="Kuske C.R."/>
            <person name="Larimer F."/>
            <person name="Land M."/>
            <person name="Hauser L."/>
            <person name="Kyrpides N."/>
            <person name="Ovchinnikova G."/>
            <person name="Brettar I."/>
            <person name="Rodrigues J."/>
            <person name="Konstantinidis K."/>
            <person name="Tiedje J."/>
        </authorList>
    </citation>
    <scope>NUCLEOTIDE SEQUENCE [LARGE SCALE GENOMIC DNA]</scope>
    <source>
        <strain>OS223</strain>
    </source>
</reference>